<reference evidence="12" key="1">
    <citation type="submission" date="2004-07" db="EMBL/GenBank/DDBJ databases">
        <title>Sequence of Xenopus tropicalis development genes.</title>
        <authorList>
            <person name="Qin S."/>
            <person name="Dors M."/>
            <person name="Johnson E."/>
            <person name="Bloom S."/>
            <person name="Hood L."/>
            <person name="Rowen L."/>
        </authorList>
    </citation>
    <scope>NUCLEOTIDE SEQUENCE [GENOMIC DNA]</scope>
</reference>
<reference evidence="12" key="2">
    <citation type="submission" date="2006-10" db="EMBL/GenBank/DDBJ databases">
        <authorList>
            <consortium name="Sanger Xenopus tropicalis EST/cDNA project"/>
        </authorList>
    </citation>
    <scope>NUCLEOTIDE SEQUENCE [LARGE SCALE MRNA]</scope>
    <source>
        <tissue evidence="13">Neurula</tissue>
    </source>
</reference>
<reference evidence="11" key="3">
    <citation type="journal article" date="2008" name="Bone">
        <title>Skeletogenesis in Xenopus tropicalis: characteristic bone development in an anuran amphibian.</title>
        <authorList>
            <person name="Miura S."/>
            <person name="Hanaoka K."/>
            <person name="Togashi S."/>
        </authorList>
    </citation>
    <scope>PUTATIVE FUNCTION</scope>
    <scope>TISSUE SPECIFICITY</scope>
</reference>
<reference evidence="11" key="4">
    <citation type="journal article" date="2008" name="Chromosome Res.">
        <title>Diversity in the origins of sex chromosomes in anurans inferred from comparative mapping of sexual differentiation genes for three species of the Raninae and Xenopodinae.</title>
        <authorList>
            <person name="Uno Y."/>
            <person name="Nishida C."/>
            <person name="Yoshimoto S."/>
            <person name="Ito M."/>
            <person name="Oshima Y."/>
            <person name="Yokoyama S."/>
            <person name="Nakamura M."/>
            <person name="Matsuda Y."/>
        </authorList>
    </citation>
    <scope>IDENTIFICATION</scope>
</reference>
<reference evidence="11" key="5">
    <citation type="journal article" date="2008" name="Dev. Dyn.">
        <title>Sex-specific expression of SOX9 during gonadogenesis in the amphibian Xenopus tropicalis.</title>
        <authorList>
            <person name="El Jamil A."/>
            <person name="Kanhoush R."/>
            <person name="Magre S."/>
            <person name="Boizet-Bonhoure B."/>
            <person name="Penrad-Mobayed M."/>
        </authorList>
    </citation>
    <scope>PUTATIVE FUNCTION</scope>
    <scope>SUBCELLULAR LOCATION</scope>
    <scope>TISSUE SPECIFICITY</scope>
</reference>
<comment type="function">
    <text evidence="3 6 7">Transcription factor that plays a key role in chondrocytes differentiation and skeletal development. Specifically binds the 5'-ACAAAG-3' DNA motif present in enhancers and super-enhancers and promotes expression of genes important for chondrogenesis, including COL2A1. Plays a central role in successive steps of chondrocyte differentiation. Absolutely required for precartilaginous condensation, the first step in chondrogenesis during which skeletal progenitors differentiate into prechondrocytes. Together with SOX5 and SOX6, required for overt chondrogenesis when condensed prechondrocytes differentiate into early stage chondrocytes, the second step in chondrogenesis. Later, required to direct hypertrophic maturation and block osteoblast differentiation of growth plate chondrocytes: maintains chondrocyte columnar proliferation, delays prehypertrophy and then prevents osteoblastic differentiation of chondrocytes. Also required for chondrocyte hypertrophy, both indirectly, by keeping the lineage fate of chondrocytes, and directly, by remaining present in upper hypertrophic cells. Low lipid levels are the main nutritional determinant for chondrogenic commitment of skeletal progenitor cells: when lipids levels are low, FOXO transcription factors promote expression of SOX9, which induces chondrogenic commitment and suppresses fatty acid oxidation. In addition to cartilage development, also acts as a regulator of proliferation and differentiation in epithelial stem/progenitor cells (By similarity). Unlikely to play a role in sex determination but may function during testicular and ovarian differentiation (PubMed:18692165, PubMed:18816826).</text>
</comment>
<comment type="subunit">
    <text evidence="1">Interacts with the sumoylation factors ube2i/ubc9 and sumo1.</text>
</comment>
<comment type="subcellular location">
    <subcellularLocation>
        <location evidence="4 7">Nucleus</location>
    </subcellularLocation>
    <subcellularLocation>
        <location evidence="7">Cytoplasm</location>
    </subcellularLocation>
    <text evidence="7">Restricted to the nucleus of Sertoli-like cells in the testis, but localizes to the cytoplasm of previtellogenic oocytes in the ovary before being translocated into the nucleus of vitellogenic oocytes.</text>
</comment>
<comment type="tissue specificity">
    <text evidence="6 7">Expressed in both male and female gonads from after metamorphosis through to adult stages. In the testis, expression is restricted to the supporting Sertoli-like cells. Conversely in the ovary, expression is localized to primary oocytes (at protein level). In developing limbs, expressed before chrondrocytes form (stage 52 tadpoles) and throughout the cartilaginous anlagen until stage 56, after which expression ceases in the enlarged cells of the diaphysis. At later stages, expression continues in the chondrocytes of the epiphysis and metaphysis, and weak expression is seen in most of the diaphysis.</text>
</comment>
<comment type="domain">
    <text evidence="2">The 9aaTAD motif is a transactivation domain present in a large number of yeast and animal transcription factors.</text>
</comment>
<comment type="PTM">
    <text evidence="1">Sumoylated. Lys-370 is the major site of sumoylation, although sumoylation at Lys-61 also occurs. Sumoylation plays a key role in regulating formation of the neural crest and otic placode (By similarity).</text>
</comment>
<sequence>MNLLDPFMKMTEEQDKCMSGAPSPTMSEDSAGSPCPSGSGSDTENTRPQENTFPKGDPELKKETEDEKFPVCIREAVSQVLKGYDWTLVPMPVRVNGSSKSKPHVKRPMNAFMVWAQAARRKLADQYPHLHNAELSKTLGKLWRLLNEGEKRPFVEEAERLRIQHKKDHPDYKYQPRRRKSVKNGQSEQEDGAEQTHISPNAIFKALQADSPHSASSMSEVHSPGEHSGQSQGPPTPPTTPKTDVQPGKPDLKREGRPLQESGRQPPHIDFRDVDIGELSSEVISTIETFDVNEFDQYLPPNGHPGVGSTQAPYTGSYGINSTPSATPGAGPAWMSKQQQQQQQQPQPPQHSLSTINSEQSQSQQRTHIKTEQLSPSHYSDQQQQHSPQQLNYSSFNLQHYSSSYPTITRAQYDYTEHQGSNSYYSHASGQNSGLYSNFSYMNPSQRPMYTPIADTTGVPSIPQTHSPQHWEQPVYTQLTRP</sequence>
<gene>
    <name evidence="8" type="primary">sox9</name>
    <name evidence="10" type="ORF">TNeu111f21.1</name>
</gene>
<evidence type="ECO:0000250" key="1">
    <source>
        <dbReference type="UniProtKB" id="B7ZR65"/>
    </source>
</evidence>
<evidence type="ECO:0000250" key="2">
    <source>
        <dbReference type="UniProtKB" id="P48436"/>
    </source>
</evidence>
<evidence type="ECO:0000250" key="3">
    <source>
        <dbReference type="UniProtKB" id="Q04887"/>
    </source>
</evidence>
<evidence type="ECO:0000255" key="4">
    <source>
        <dbReference type="PROSITE-ProRule" id="PRU00267"/>
    </source>
</evidence>
<evidence type="ECO:0000256" key="5">
    <source>
        <dbReference type="SAM" id="MobiDB-lite"/>
    </source>
</evidence>
<evidence type="ECO:0000269" key="6">
    <source>
    </source>
</evidence>
<evidence type="ECO:0000269" key="7">
    <source>
    </source>
</evidence>
<evidence type="ECO:0000303" key="8">
    <source>
    </source>
</evidence>
<evidence type="ECO:0000303" key="9">
    <source>
    </source>
</evidence>
<evidence type="ECO:0000303" key="10">
    <source ref="2"/>
</evidence>
<evidence type="ECO:0000305" key="11"/>
<evidence type="ECO:0000312" key="12">
    <source>
        <dbReference type="EMBL" id="AAT72000.1"/>
    </source>
</evidence>
<evidence type="ECO:0000312" key="13">
    <source>
        <dbReference type="EMBL" id="CAJ82635.1"/>
    </source>
</evidence>
<name>SOX9_XENTR</name>
<accession>Q6F2E7</accession>
<protein>
    <recommendedName>
        <fullName evidence="11">Transcription factor Sox-9</fullName>
        <shortName evidence="9">Xt-sox9</shortName>
    </recommendedName>
</protein>
<feature type="chain" id="PRO_0000377417" description="Transcription factor Sox-9">
    <location>
        <begin position="1"/>
        <end position="482"/>
    </location>
</feature>
<feature type="DNA-binding region" description="HMG box" evidence="4">
    <location>
        <begin position="105"/>
        <end position="173"/>
    </location>
</feature>
<feature type="region of interest" description="Disordered" evidence="5">
    <location>
        <begin position="1"/>
        <end position="66"/>
    </location>
</feature>
<feature type="region of interest" description="Dimerization (DIM)" evidence="2">
    <location>
        <begin position="63"/>
        <end position="103"/>
    </location>
</feature>
<feature type="region of interest" description="PQA" evidence="2">
    <location>
        <begin position="63"/>
        <end position="103"/>
    </location>
</feature>
<feature type="region of interest" description="Disordered" evidence="5">
    <location>
        <begin position="160"/>
        <end position="274"/>
    </location>
</feature>
<feature type="region of interest" description="Transactivation domain (TAM)" evidence="2">
    <location>
        <begin position="224"/>
        <end position="308"/>
    </location>
</feature>
<feature type="region of interest" description="Disordered" evidence="5">
    <location>
        <begin position="295"/>
        <end position="395"/>
    </location>
</feature>
<feature type="region of interest" description="Transactivation domain (TAC)" evidence="2">
    <location>
        <begin position="366"/>
        <end position="482"/>
    </location>
</feature>
<feature type="region of interest" description="Disordered" evidence="5">
    <location>
        <begin position="448"/>
        <end position="482"/>
    </location>
</feature>
<feature type="short sequence motif" description="9aaTAD 1" evidence="2">
    <location>
        <begin position="276"/>
        <end position="285"/>
    </location>
</feature>
<feature type="short sequence motif" description="9aaTAD 2" evidence="2">
    <location>
        <begin position="291"/>
        <end position="299"/>
    </location>
</feature>
<feature type="short sequence motif" description="9aaTAD 3" evidence="2">
    <location>
        <begin position="433"/>
        <end position="441"/>
    </location>
</feature>
<feature type="compositionally biased region" description="Low complexity" evidence="5">
    <location>
        <begin position="30"/>
        <end position="41"/>
    </location>
</feature>
<feature type="compositionally biased region" description="Polar residues" evidence="5">
    <location>
        <begin position="42"/>
        <end position="52"/>
    </location>
</feature>
<feature type="compositionally biased region" description="Basic and acidic residues" evidence="5">
    <location>
        <begin position="56"/>
        <end position="66"/>
    </location>
</feature>
<feature type="compositionally biased region" description="Basic and acidic residues" evidence="5">
    <location>
        <begin position="160"/>
        <end position="174"/>
    </location>
</feature>
<feature type="compositionally biased region" description="Polar residues" evidence="5">
    <location>
        <begin position="211"/>
        <end position="220"/>
    </location>
</feature>
<feature type="compositionally biased region" description="Polar residues" evidence="5">
    <location>
        <begin position="308"/>
        <end position="326"/>
    </location>
</feature>
<feature type="compositionally biased region" description="Polar residues" evidence="5">
    <location>
        <begin position="351"/>
        <end position="366"/>
    </location>
</feature>
<feature type="compositionally biased region" description="Low complexity" evidence="5">
    <location>
        <begin position="375"/>
        <end position="390"/>
    </location>
</feature>
<feature type="compositionally biased region" description="Polar residues" evidence="5">
    <location>
        <begin position="458"/>
        <end position="482"/>
    </location>
</feature>
<feature type="cross-link" description="Glycyl lysine isopeptide (Lys-Gly) (interchain with G-Cter in SUMO)" evidence="1">
    <location>
        <position position="61"/>
    </location>
</feature>
<feature type="cross-link" description="Glycyl lysine isopeptide (Lys-Gly) (interchain with G-Cter in SUMO)" evidence="1">
    <location>
        <position position="370"/>
    </location>
</feature>
<dbReference type="EMBL" id="AC148478">
    <property type="protein sequence ID" value="AAT72000.1"/>
    <property type="molecule type" value="Genomic_DNA"/>
</dbReference>
<dbReference type="EMBL" id="CR855424">
    <property type="protein sequence ID" value="CAJ82635.1"/>
    <property type="molecule type" value="mRNA"/>
</dbReference>
<dbReference type="RefSeq" id="NP_001016853.1">
    <property type="nucleotide sequence ID" value="NM_001016853.2"/>
</dbReference>
<dbReference type="RefSeq" id="XP_031749968.1">
    <property type="nucleotide sequence ID" value="XM_031894108.1"/>
</dbReference>
<dbReference type="SMR" id="Q6F2E7"/>
<dbReference type="FunCoup" id="Q6F2E7">
    <property type="interactions" value="1262"/>
</dbReference>
<dbReference type="STRING" id="8364.ENSXETP00000025787"/>
<dbReference type="GeneID" id="549607"/>
<dbReference type="KEGG" id="xtr:549607"/>
<dbReference type="AGR" id="Xenbase:XB-GENE-1034769"/>
<dbReference type="CTD" id="6662"/>
<dbReference type="Xenbase" id="XB-GENE-1034769">
    <property type="gene designation" value="sox9"/>
</dbReference>
<dbReference type="InParanoid" id="Q6F2E7"/>
<dbReference type="OMA" id="QSSNSYY"/>
<dbReference type="OrthoDB" id="6247875at2759"/>
<dbReference type="Reactome" id="R-XTR-3769402">
    <property type="pathway name" value="Deactivation of the beta-catenin transactivating complex"/>
</dbReference>
<dbReference type="Reactome" id="R-XTR-8878166">
    <property type="pathway name" value="Transcriptional regulation by RUNX2"/>
</dbReference>
<dbReference type="Proteomes" id="UP000008143">
    <property type="component" value="Chromosome 10"/>
</dbReference>
<dbReference type="Bgee" id="ENSXETG00000035507">
    <property type="expression patterns" value="Expressed in neurula embryo and 13 other cell types or tissues"/>
</dbReference>
<dbReference type="GO" id="GO:0005737">
    <property type="term" value="C:cytoplasm"/>
    <property type="evidence" value="ECO:0000314"/>
    <property type="project" value="UniProtKB"/>
</dbReference>
<dbReference type="GO" id="GO:0005634">
    <property type="term" value="C:nucleus"/>
    <property type="evidence" value="ECO:0000314"/>
    <property type="project" value="UniProtKB"/>
</dbReference>
<dbReference type="GO" id="GO:0003677">
    <property type="term" value="F:DNA binding"/>
    <property type="evidence" value="ECO:0000250"/>
    <property type="project" value="UniProtKB"/>
</dbReference>
<dbReference type="GO" id="GO:0043565">
    <property type="term" value="F:sequence-specific DNA binding"/>
    <property type="evidence" value="ECO:0000250"/>
    <property type="project" value="UniProtKB"/>
</dbReference>
<dbReference type="GO" id="GO:0003714">
    <property type="term" value="F:transcription corepressor activity"/>
    <property type="evidence" value="ECO:0000270"/>
    <property type="project" value="Xenbase"/>
</dbReference>
<dbReference type="GO" id="GO:0044389">
    <property type="term" value="F:ubiquitin-like protein ligase binding"/>
    <property type="evidence" value="ECO:0000250"/>
    <property type="project" value="UniProtKB"/>
</dbReference>
<dbReference type="GO" id="GO:0051216">
    <property type="term" value="P:cartilage development"/>
    <property type="evidence" value="ECO:0000270"/>
    <property type="project" value="UniProtKB"/>
</dbReference>
<dbReference type="GO" id="GO:0002062">
    <property type="term" value="P:chondrocyte differentiation"/>
    <property type="evidence" value="ECO:0000250"/>
    <property type="project" value="UniProtKB"/>
</dbReference>
<dbReference type="GO" id="GO:0007506">
    <property type="term" value="P:gonadal mesoderm development"/>
    <property type="evidence" value="ECO:0007669"/>
    <property type="project" value="UniProtKB-KW"/>
</dbReference>
<dbReference type="GO" id="GO:0003430">
    <property type="term" value="P:growth plate cartilage chondrocyte growth"/>
    <property type="evidence" value="ECO:0000250"/>
    <property type="project" value="UniProtKB"/>
</dbReference>
<dbReference type="GO" id="GO:0048839">
    <property type="term" value="P:inner ear development"/>
    <property type="evidence" value="ECO:0000315"/>
    <property type="project" value="Xenbase"/>
</dbReference>
<dbReference type="GO" id="GO:0090090">
    <property type="term" value="P:negative regulation of canonical Wnt signaling pathway"/>
    <property type="evidence" value="ECO:0000250"/>
    <property type="project" value="UniProtKB"/>
</dbReference>
<dbReference type="GO" id="GO:0046322">
    <property type="term" value="P:negative regulation of fatty acid oxidation"/>
    <property type="evidence" value="ECO:0000250"/>
    <property type="project" value="UniProtKB"/>
</dbReference>
<dbReference type="GO" id="GO:0045668">
    <property type="term" value="P:negative regulation of osteoblast differentiation"/>
    <property type="evidence" value="ECO:0000250"/>
    <property type="project" value="UniProtKB"/>
</dbReference>
<dbReference type="GO" id="GO:0014029">
    <property type="term" value="P:neural crest formation"/>
    <property type="evidence" value="ECO:0000315"/>
    <property type="project" value="Xenbase"/>
</dbReference>
<dbReference type="GO" id="GO:0043049">
    <property type="term" value="P:otic placode formation"/>
    <property type="evidence" value="ECO:0000250"/>
    <property type="project" value="UniProtKB"/>
</dbReference>
<dbReference type="GO" id="GO:0045893">
    <property type="term" value="P:positive regulation of DNA-templated transcription"/>
    <property type="evidence" value="ECO:0000250"/>
    <property type="project" value="UniProtKB"/>
</dbReference>
<dbReference type="GO" id="GO:0045944">
    <property type="term" value="P:positive regulation of transcription by RNA polymerase II"/>
    <property type="evidence" value="ECO:0000250"/>
    <property type="project" value="UniProtKB"/>
</dbReference>
<dbReference type="GO" id="GO:0070542">
    <property type="term" value="P:response to fatty acid"/>
    <property type="evidence" value="ECO:0000250"/>
    <property type="project" value="UniProtKB"/>
</dbReference>
<dbReference type="CDD" id="cd22031">
    <property type="entry name" value="HMG-box_SoxE"/>
    <property type="match status" value="1"/>
</dbReference>
<dbReference type="FunFam" id="1.10.30.10:FF:000004">
    <property type="entry name" value="Transcription factor SOX-10"/>
    <property type="match status" value="1"/>
</dbReference>
<dbReference type="Gene3D" id="1.10.30.10">
    <property type="entry name" value="High mobility group box domain"/>
    <property type="match status" value="1"/>
</dbReference>
<dbReference type="InterPro" id="IPR009071">
    <property type="entry name" value="HMG_box_dom"/>
</dbReference>
<dbReference type="InterPro" id="IPR036910">
    <property type="entry name" value="HMG_box_dom_sf"/>
</dbReference>
<dbReference type="InterPro" id="IPR022151">
    <property type="entry name" value="Sox_N"/>
</dbReference>
<dbReference type="InterPro" id="IPR050917">
    <property type="entry name" value="SOX_TF"/>
</dbReference>
<dbReference type="PANTHER" id="PTHR45803">
    <property type="entry name" value="SOX100B"/>
    <property type="match status" value="1"/>
</dbReference>
<dbReference type="PANTHER" id="PTHR45803:SF1">
    <property type="entry name" value="TRANSCRIPTION FACTOR SOX-9"/>
    <property type="match status" value="1"/>
</dbReference>
<dbReference type="Pfam" id="PF00505">
    <property type="entry name" value="HMG_box"/>
    <property type="match status" value="1"/>
</dbReference>
<dbReference type="Pfam" id="PF12444">
    <property type="entry name" value="Sox_N"/>
    <property type="match status" value="1"/>
</dbReference>
<dbReference type="SMART" id="SM00398">
    <property type="entry name" value="HMG"/>
    <property type="match status" value="1"/>
</dbReference>
<dbReference type="SUPFAM" id="SSF47095">
    <property type="entry name" value="HMG-box"/>
    <property type="match status" value="1"/>
</dbReference>
<dbReference type="PROSITE" id="PS50118">
    <property type="entry name" value="HMG_BOX_2"/>
    <property type="match status" value="1"/>
</dbReference>
<keyword id="KW-0010">Activator</keyword>
<keyword id="KW-0891">Chondrogenesis</keyword>
<keyword id="KW-0963">Cytoplasm</keyword>
<keyword id="KW-0217">Developmental protein</keyword>
<keyword id="KW-0221">Differentiation</keyword>
<keyword id="KW-0238">DNA-binding</keyword>
<keyword id="KW-0334">Gonadal differentiation</keyword>
<keyword id="KW-1017">Isopeptide bond</keyword>
<keyword id="KW-0539">Nucleus</keyword>
<keyword id="KW-1185">Reference proteome</keyword>
<keyword id="KW-0804">Transcription</keyword>
<keyword id="KW-0805">Transcription regulation</keyword>
<keyword id="KW-0832">Ubl conjugation</keyword>
<proteinExistence type="evidence at protein level"/>
<organism>
    <name type="scientific">Xenopus tropicalis</name>
    <name type="common">Western clawed frog</name>
    <name type="synonym">Silurana tropicalis</name>
    <dbReference type="NCBI Taxonomy" id="8364"/>
    <lineage>
        <taxon>Eukaryota</taxon>
        <taxon>Metazoa</taxon>
        <taxon>Chordata</taxon>
        <taxon>Craniata</taxon>
        <taxon>Vertebrata</taxon>
        <taxon>Euteleostomi</taxon>
        <taxon>Amphibia</taxon>
        <taxon>Batrachia</taxon>
        <taxon>Anura</taxon>
        <taxon>Pipoidea</taxon>
        <taxon>Pipidae</taxon>
        <taxon>Xenopodinae</taxon>
        <taxon>Xenopus</taxon>
        <taxon>Silurana</taxon>
    </lineage>
</organism>